<gene>
    <name type="ordered locus">SAV1187</name>
</gene>
<evidence type="ECO:0000250" key="1">
    <source>
        <dbReference type="UniProtKB" id="P33644"/>
    </source>
</evidence>
<evidence type="ECO:0000250" key="2">
    <source>
        <dbReference type="UniProtKB" id="P84138"/>
    </source>
</evidence>
<evidence type="ECO:0000250" key="3">
    <source>
        <dbReference type="UniProtKB" id="Q1EIR0"/>
    </source>
</evidence>
<evidence type="ECO:0000305" key="4"/>
<sequence>MNDNFKKQPHHLIYEELLQQGITLGITTRGDGLSDYPKNAFNMARYIDDRPYNITQHQLQLAEEIAFDRKNWVFPIQTHENKVACITKDDIGTNIDTLTDALHGIDAMYTYDSNVLLTMCYADCVPVYFYSTKHHFIALAHAGWRGTYTEIVKEVLKHVNFDLKDLHVVIGPSTSSSYEINDDIKNKFETLPIDSANYIETRGRDRHGIDLKKANAELLNYYGVPKENIYTTAYATSEHLELFFSYRLEKGQTGRMLAFIGQQ</sequence>
<protein>
    <recommendedName>
        <fullName>Purine nucleoside phosphorylase SAV1187</fullName>
        <ecNumber evidence="2">2.4.2.1</ecNumber>
    </recommendedName>
    <alternativeName>
        <fullName>Adenosine deaminase SAV1187</fullName>
        <ecNumber evidence="2">3.5.4.4</ecNumber>
    </alternativeName>
    <alternativeName>
        <fullName>S-methyl-5'-thioadenosine phosphorylase SAV1187</fullName>
        <ecNumber evidence="2">2.4.2.28</ecNumber>
    </alternativeName>
</protein>
<proteinExistence type="inferred from homology"/>
<feature type="chain" id="PRO_0000163172" description="Purine nucleoside phosphorylase SAV1187">
    <location>
        <begin position="1"/>
        <end position="263"/>
    </location>
</feature>
<feature type="binding site" evidence="2">
    <location>
        <position position="79"/>
    </location>
    <ligand>
        <name>Zn(2+)</name>
        <dbReference type="ChEBI" id="CHEBI:29105"/>
        <note>catalytic</note>
    </ligand>
</feature>
<feature type="binding site" evidence="2">
    <location>
        <position position="124"/>
    </location>
    <ligand>
        <name>Zn(2+)</name>
        <dbReference type="ChEBI" id="CHEBI:29105"/>
        <note>catalytic</note>
    </ligand>
</feature>
<feature type="binding site" evidence="2">
    <location>
        <position position="141"/>
    </location>
    <ligand>
        <name>Zn(2+)</name>
        <dbReference type="ChEBI" id="CHEBI:29105"/>
        <note>catalytic</note>
    </ligand>
</feature>
<dbReference type="EC" id="2.4.2.1" evidence="2"/>
<dbReference type="EC" id="3.5.4.4" evidence="2"/>
<dbReference type="EC" id="2.4.2.28" evidence="2"/>
<dbReference type="EMBL" id="BA000017">
    <property type="protein sequence ID" value="BAB57349.1"/>
    <property type="molecule type" value="Genomic_DNA"/>
</dbReference>
<dbReference type="SMR" id="Q99US8"/>
<dbReference type="KEGG" id="sav:SAV1187"/>
<dbReference type="HOGENOM" id="CLU_065784_0_0_9"/>
<dbReference type="PhylomeDB" id="Q99US8"/>
<dbReference type="Proteomes" id="UP000002481">
    <property type="component" value="Chromosome"/>
</dbReference>
<dbReference type="GO" id="GO:0004000">
    <property type="term" value="F:adenosine deaminase activity"/>
    <property type="evidence" value="ECO:0007669"/>
    <property type="project" value="RHEA"/>
</dbReference>
<dbReference type="GO" id="GO:0005507">
    <property type="term" value="F:copper ion binding"/>
    <property type="evidence" value="ECO:0007669"/>
    <property type="project" value="TreeGrafter"/>
</dbReference>
<dbReference type="GO" id="GO:0016491">
    <property type="term" value="F:oxidoreductase activity"/>
    <property type="evidence" value="ECO:0007669"/>
    <property type="project" value="UniProtKB-KW"/>
</dbReference>
<dbReference type="GO" id="GO:0017061">
    <property type="term" value="F:S-methyl-5-thioadenosine phosphorylase activity"/>
    <property type="evidence" value="ECO:0007669"/>
    <property type="project" value="UniProtKB-EC"/>
</dbReference>
<dbReference type="CDD" id="cd16833">
    <property type="entry name" value="YfiH"/>
    <property type="match status" value="1"/>
</dbReference>
<dbReference type="Gene3D" id="3.60.140.10">
    <property type="entry name" value="CNF1/YfiH-like putative cysteine hydrolases"/>
    <property type="match status" value="1"/>
</dbReference>
<dbReference type="InterPro" id="IPR003730">
    <property type="entry name" value="Cu_polyphenol_OxRdtase"/>
</dbReference>
<dbReference type="InterPro" id="IPR038371">
    <property type="entry name" value="Cu_polyphenol_OxRdtase_sf"/>
</dbReference>
<dbReference type="InterPro" id="IPR011324">
    <property type="entry name" value="Cytotoxic_necrot_fac-like_cat"/>
</dbReference>
<dbReference type="NCBIfam" id="TIGR00726">
    <property type="entry name" value="peptidoglycan editing factor PgeF"/>
    <property type="match status" value="1"/>
</dbReference>
<dbReference type="PANTHER" id="PTHR30616:SF2">
    <property type="entry name" value="PURINE NUCLEOSIDE PHOSPHORYLASE LACC1"/>
    <property type="match status" value="1"/>
</dbReference>
<dbReference type="PANTHER" id="PTHR30616">
    <property type="entry name" value="UNCHARACTERIZED PROTEIN YFIH"/>
    <property type="match status" value="1"/>
</dbReference>
<dbReference type="Pfam" id="PF02578">
    <property type="entry name" value="Cu-oxidase_4"/>
    <property type="match status" value="1"/>
</dbReference>
<dbReference type="SUPFAM" id="SSF64438">
    <property type="entry name" value="CNF1/YfiH-like putative cysteine hydrolases"/>
    <property type="match status" value="1"/>
</dbReference>
<name>PURNU_STAAM</name>
<keyword id="KW-0186">Copper</keyword>
<keyword id="KW-0378">Hydrolase</keyword>
<keyword id="KW-0479">Metal-binding</keyword>
<keyword id="KW-0560">Oxidoreductase</keyword>
<keyword id="KW-0808">Transferase</keyword>
<keyword id="KW-0862">Zinc</keyword>
<reference key="1">
    <citation type="journal article" date="2001" name="Lancet">
        <title>Whole genome sequencing of meticillin-resistant Staphylococcus aureus.</title>
        <authorList>
            <person name="Kuroda M."/>
            <person name="Ohta T."/>
            <person name="Uchiyama I."/>
            <person name="Baba T."/>
            <person name="Yuzawa H."/>
            <person name="Kobayashi I."/>
            <person name="Cui L."/>
            <person name="Oguchi A."/>
            <person name="Aoki K."/>
            <person name="Nagai Y."/>
            <person name="Lian J.-Q."/>
            <person name="Ito T."/>
            <person name="Kanamori M."/>
            <person name="Matsumaru H."/>
            <person name="Maruyama A."/>
            <person name="Murakami H."/>
            <person name="Hosoyama A."/>
            <person name="Mizutani-Ui Y."/>
            <person name="Takahashi N.K."/>
            <person name="Sawano T."/>
            <person name="Inoue R."/>
            <person name="Kaito C."/>
            <person name="Sekimizu K."/>
            <person name="Hirakawa H."/>
            <person name="Kuhara S."/>
            <person name="Goto S."/>
            <person name="Yabuzaki J."/>
            <person name="Kanehisa M."/>
            <person name="Yamashita A."/>
            <person name="Oshima K."/>
            <person name="Furuya K."/>
            <person name="Yoshino C."/>
            <person name="Shiba T."/>
            <person name="Hattori M."/>
            <person name="Ogasawara N."/>
            <person name="Hayashi H."/>
            <person name="Hiramatsu K."/>
        </authorList>
    </citation>
    <scope>NUCLEOTIDE SEQUENCE [LARGE SCALE GENOMIC DNA]</scope>
    <source>
        <strain>Mu50 / ATCC 700699</strain>
    </source>
</reference>
<comment type="function">
    <text evidence="2">Purine nucleoside enzyme that catalyzes the phosphorolysis of adenosine and inosine nucleosides, yielding D-ribose 1-phosphate and the respective free bases, adenine and hypoxanthine. Also catalyzes the phosphorolysis of S-methyl-5'-thioadenosine into adenine and S-methyl-5-thio-alpha-D-ribose 1-phosphate. Also has adenosine deaminase activity.</text>
</comment>
<comment type="catalytic activity">
    <reaction evidence="2">
        <text>adenosine + phosphate = alpha-D-ribose 1-phosphate + adenine</text>
        <dbReference type="Rhea" id="RHEA:27642"/>
        <dbReference type="ChEBI" id="CHEBI:16335"/>
        <dbReference type="ChEBI" id="CHEBI:16708"/>
        <dbReference type="ChEBI" id="CHEBI:43474"/>
        <dbReference type="ChEBI" id="CHEBI:57720"/>
        <dbReference type="EC" id="2.4.2.1"/>
    </reaction>
    <physiologicalReaction direction="left-to-right" evidence="2">
        <dbReference type="Rhea" id="RHEA:27643"/>
    </physiologicalReaction>
</comment>
<comment type="catalytic activity">
    <reaction evidence="2">
        <text>S-methyl-5'-thioadenosine + phosphate = 5-(methylsulfanyl)-alpha-D-ribose 1-phosphate + adenine</text>
        <dbReference type="Rhea" id="RHEA:11852"/>
        <dbReference type="ChEBI" id="CHEBI:16708"/>
        <dbReference type="ChEBI" id="CHEBI:17509"/>
        <dbReference type="ChEBI" id="CHEBI:43474"/>
        <dbReference type="ChEBI" id="CHEBI:58533"/>
        <dbReference type="EC" id="2.4.2.28"/>
    </reaction>
    <physiologicalReaction direction="left-to-right" evidence="2">
        <dbReference type="Rhea" id="RHEA:11853"/>
    </physiologicalReaction>
</comment>
<comment type="catalytic activity">
    <reaction evidence="2">
        <text>inosine + phosphate = alpha-D-ribose 1-phosphate + hypoxanthine</text>
        <dbReference type="Rhea" id="RHEA:27646"/>
        <dbReference type="ChEBI" id="CHEBI:17368"/>
        <dbReference type="ChEBI" id="CHEBI:17596"/>
        <dbReference type="ChEBI" id="CHEBI:43474"/>
        <dbReference type="ChEBI" id="CHEBI:57720"/>
        <dbReference type="EC" id="2.4.2.1"/>
    </reaction>
    <physiologicalReaction direction="left-to-right" evidence="2">
        <dbReference type="Rhea" id="RHEA:27647"/>
    </physiologicalReaction>
</comment>
<comment type="catalytic activity">
    <reaction evidence="2">
        <text>adenosine + H2O + H(+) = inosine + NH4(+)</text>
        <dbReference type="Rhea" id="RHEA:24408"/>
        <dbReference type="ChEBI" id="CHEBI:15377"/>
        <dbReference type="ChEBI" id="CHEBI:15378"/>
        <dbReference type="ChEBI" id="CHEBI:16335"/>
        <dbReference type="ChEBI" id="CHEBI:17596"/>
        <dbReference type="ChEBI" id="CHEBI:28938"/>
        <dbReference type="EC" id="3.5.4.4"/>
    </reaction>
    <physiologicalReaction direction="left-to-right" evidence="2">
        <dbReference type="Rhea" id="RHEA:24409"/>
    </physiologicalReaction>
</comment>
<comment type="cofactor">
    <cofactor evidence="1">
        <name>Cu(2+)</name>
        <dbReference type="ChEBI" id="CHEBI:29036"/>
    </cofactor>
    <cofactor evidence="2">
        <name>Zn(2+)</name>
        <dbReference type="ChEBI" id="CHEBI:29105"/>
    </cofactor>
</comment>
<comment type="subunit">
    <text evidence="3">Homodimer.</text>
</comment>
<comment type="similarity">
    <text evidence="4">Belongs to the purine nucleoside phosphorylase YfiH/LACC1 family.</text>
</comment>
<accession>Q99US8</accession>
<organism>
    <name type="scientific">Staphylococcus aureus (strain Mu50 / ATCC 700699)</name>
    <dbReference type="NCBI Taxonomy" id="158878"/>
    <lineage>
        <taxon>Bacteria</taxon>
        <taxon>Bacillati</taxon>
        <taxon>Bacillota</taxon>
        <taxon>Bacilli</taxon>
        <taxon>Bacillales</taxon>
        <taxon>Staphylococcaceae</taxon>
        <taxon>Staphylococcus</taxon>
    </lineage>
</organism>